<accession>P83553</accession>
<organism evidence="5">
    <name type="scientific">Biomphalaria glabrata</name>
    <name type="common">Bloodfluke planorb</name>
    <name type="synonym">Freshwater snail</name>
    <dbReference type="NCBI Taxonomy" id="6526"/>
    <lineage>
        <taxon>Eukaryota</taxon>
        <taxon>Metazoa</taxon>
        <taxon>Spiralia</taxon>
        <taxon>Lophotrochozoa</taxon>
        <taxon>Mollusca</taxon>
        <taxon>Gastropoda</taxon>
        <taxon>Heterobranchia</taxon>
        <taxon>Euthyneura</taxon>
        <taxon>Panpulmonata</taxon>
        <taxon>Hygrophila</taxon>
        <taxon>Lymnaeoidea</taxon>
        <taxon>Planorbidae</taxon>
        <taxon>Biomphalaria</taxon>
    </lineage>
</organism>
<keyword id="KW-0130">Cell adhesion</keyword>
<keyword id="KW-0903">Direct protein sequencing</keyword>
<keyword id="KW-1015">Disulfide bond</keyword>
<keyword id="KW-0272">Extracellular matrix</keyword>
<keyword id="KW-0325">Glycoprotein</keyword>
<keyword id="KW-1185">Reference proteome</keyword>
<keyword id="KW-0964">Secreted</keyword>
<protein>
    <recommendedName>
        <fullName>Dermatopontin</fullName>
    </recommendedName>
    <alternativeName>
        <fullName>Tyrosine-rich acidic matrix protein</fullName>
        <shortName>TRAMP</shortName>
    </alternativeName>
</protein>
<evidence type="ECO:0000250" key="1"/>
<evidence type="ECO:0000250" key="2">
    <source>
        <dbReference type="UniProtKB" id="Q07507"/>
    </source>
</evidence>
<evidence type="ECO:0000255" key="3"/>
<evidence type="ECO:0000269" key="4">
    <source>
    </source>
</evidence>
<evidence type="ECO:0000305" key="5"/>
<proteinExistence type="evidence at protein level"/>
<comment type="function">
    <text evidence="1">Seems to mediate adhesion by cell surface integrin binding.</text>
</comment>
<comment type="subcellular location">
    <subcellularLocation>
        <location evidence="4">Secreted</location>
        <location evidence="4">Extracellular space</location>
        <location evidence="4">Extracellular matrix</location>
    </subcellularLocation>
</comment>
<comment type="PTM">
    <text>The terminal mannose residues of the polysaccharide are 3-O-methylated. No tyrosine sulfation was detected.</text>
</comment>
<comment type="similarity">
    <text evidence="2">Belongs to the dermatopontin family.</text>
</comment>
<dbReference type="STRING" id="6526.P83553"/>
<dbReference type="iPTMnet" id="P83553"/>
<dbReference type="VEuPathDB" id="VectorBase:BGLAX_036705"/>
<dbReference type="VEuPathDB" id="VectorBase:BGLB012931"/>
<dbReference type="Proteomes" id="UP000076420">
    <property type="component" value="Unassembled WGS sequence"/>
</dbReference>
<dbReference type="Proteomes" id="UP001165740">
    <property type="component" value="Unplaced"/>
</dbReference>
<dbReference type="GO" id="GO:0031012">
    <property type="term" value="C:extracellular matrix"/>
    <property type="evidence" value="ECO:0007669"/>
    <property type="project" value="TreeGrafter"/>
</dbReference>
<dbReference type="GO" id="GO:0005615">
    <property type="term" value="C:extracellular space"/>
    <property type="evidence" value="ECO:0007669"/>
    <property type="project" value="TreeGrafter"/>
</dbReference>
<dbReference type="GO" id="GO:0007155">
    <property type="term" value="P:cell adhesion"/>
    <property type="evidence" value="ECO:0007669"/>
    <property type="project" value="UniProtKB-KW"/>
</dbReference>
<dbReference type="GO" id="GO:0030199">
    <property type="term" value="P:collagen fibril organization"/>
    <property type="evidence" value="ECO:0007669"/>
    <property type="project" value="TreeGrafter"/>
</dbReference>
<dbReference type="InterPro" id="IPR026645">
    <property type="entry name" value="Dermatopontin"/>
</dbReference>
<dbReference type="PANTHER" id="PTHR15040:SF1">
    <property type="entry name" value="DERMATOPONTIN-LIKE ISOFORM X1"/>
    <property type="match status" value="1"/>
</dbReference>
<dbReference type="PANTHER" id="PTHR15040">
    <property type="entry name" value="DERMATOPONTIN-RELATED"/>
    <property type="match status" value="1"/>
</dbReference>
<dbReference type="Pfam" id="PF14704">
    <property type="entry name" value="DERM"/>
    <property type="match status" value="1"/>
</dbReference>
<feature type="chain" id="PRO_0000145480" description="Dermatopontin">
    <location>
        <begin position="1"/>
        <end position="148"/>
    </location>
</feature>
<feature type="glycosylation site" description="N-linked (GlcNAc...) asparagine" evidence="4">
    <location>
        <position position="44"/>
    </location>
</feature>
<feature type="disulfide bond" evidence="1">
    <location>
        <begin position="14"/>
        <end position="40"/>
    </location>
</feature>
<feature type="disulfide bond" description="Or C-66 with C-92" evidence="1">
    <location>
        <begin position="66"/>
        <end position="93"/>
    </location>
</feature>
<feature type="disulfide bond" evidence="3">
    <location>
        <begin position="103"/>
        <end position="147"/>
    </location>
</feature>
<name>DERM_BIOGL</name>
<sequence length="148" mass="16602">AYINLPGQPFDFQCPAGQVISRVSSVYDVLLEDRQWEFGCRTENVTQTCSTSGYANDFGLPLSYSCPGKKVLTGIRSYHDNQIEDRRFTFRCCDVMSKATTGCHVSEQVNQFNGPMLLEVSAGQAIKGAISQHDVAFEDRVWKFKLCK</sequence>
<reference evidence="5" key="1">
    <citation type="journal article" date="2003" name="Biochim. Biophys. Acta">
        <title>The major soluble 19.6 kDa protein of the organic shell matrix of the freshwater snail Biomphalaria glabrata is an N-glycosylated dermatopontin.</title>
        <authorList>
            <person name="Marxen J.C."/>
            <person name="Nimtz M."/>
            <person name="Becker W."/>
            <person name="Mann K."/>
        </authorList>
    </citation>
    <scope>PROTEIN SEQUENCE</scope>
    <scope>SUBCELLULAR LOCATION</scope>
    <scope>GLYCOSYLATION AT ASN-44</scope>
    <source>
        <tissue evidence="4">Shell</tissue>
    </source>
</reference>